<sequence>MDIRSDDAKKPMMMWFLGMLLFSMVAESNAQLSENYYASTCPSVELIVKQAVTTKFKQTVTTAPATLRMFFHDCFVEGCDASVFIASENEDAEKDADDNKSLAGDGFDTVIKAKTAVESQCPGVVSCADILALAARDVVVLVGGPEFKVELGRRDGLVSKASRVTGKLPEPGLDVRGLVQIFASNGLSLTDMIALSGAHTIGSSHCNRFANRLHNFSTFMPVDPTMDPVYAQQLIQACSDPNPDAVVDIDLTSRDTFDNSYYQNLVARKGLFTSDQALFNDLSSQATVVRFANNAEEFYSAFSSAMRNLGRVGVKVGNQGEIRRDCSAFN</sequence>
<proteinExistence type="evidence at protein level"/>
<name>PER55_ARATH</name>
<gene>
    <name type="primary">PER55</name>
    <name type="synonym">P55</name>
    <name type="ordered locus">At5g14130</name>
    <name type="ORF">MUA22.13</name>
</gene>
<organism>
    <name type="scientific">Arabidopsis thaliana</name>
    <name type="common">Mouse-ear cress</name>
    <dbReference type="NCBI Taxonomy" id="3702"/>
    <lineage>
        <taxon>Eukaryota</taxon>
        <taxon>Viridiplantae</taxon>
        <taxon>Streptophyta</taxon>
        <taxon>Embryophyta</taxon>
        <taxon>Tracheophyta</taxon>
        <taxon>Spermatophyta</taxon>
        <taxon>Magnoliopsida</taxon>
        <taxon>eudicotyledons</taxon>
        <taxon>Gunneridae</taxon>
        <taxon>Pentapetalae</taxon>
        <taxon>rosids</taxon>
        <taxon>malvids</taxon>
        <taxon>Brassicales</taxon>
        <taxon>Brassicaceae</taxon>
        <taxon>Camelineae</taxon>
        <taxon>Arabidopsis</taxon>
    </lineage>
</organism>
<keyword id="KW-0106">Calcium</keyword>
<keyword id="KW-1015">Disulfide bond</keyword>
<keyword id="KW-0325">Glycoprotein</keyword>
<keyword id="KW-0349">Heme</keyword>
<keyword id="KW-0376">Hydrogen peroxide</keyword>
<keyword id="KW-0408">Iron</keyword>
<keyword id="KW-0479">Metal-binding</keyword>
<keyword id="KW-0560">Oxidoreductase</keyword>
<keyword id="KW-0575">Peroxidase</keyword>
<keyword id="KW-1185">Reference proteome</keyword>
<keyword id="KW-0964">Secreted</keyword>
<keyword id="KW-0732">Signal</keyword>
<accession>Q96509</accession>
<reference key="1">
    <citation type="submission" date="1996-06" db="EMBL/GenBank/DDBJ databases">
        <title>From expressed sequence tags to structure, function, evolution and expression of 28 ER-targeted Arabidopsis peroxidases.</title>
        <authorList>
            <person name="Welinder K.G."/>
            <person name="Jespersen H.M."/>
            <person name="Kjaersgaard I.V.H."/>
            <person name="Justesen A.F."/>
            <person name="Oestergaard L."/>
            <person name="Abelskov A.K."/>
            <person name="Hansen L.N."/>
            <person name="Rasmussen S.K."/>
        </authorList>
    </citation>
    <scope>NUCLEOTIDE SEQUENCE [MRNA]</scope>
    <source>
        <strain>cv. Columbia</strain>
    </source>
</reference>
<reference key="2">
    <citation type="journal article" date="1997" name="DNA Res.">
        <title>Structural analysis of Arabidopsis thaliana chromosome 5. III. Sequence features of the regions of 1,191,918 bp covered by seventeen physically assigned P1 clones.</title>
        <authorList>
            <person name="Nakamura Y."/>
            <person name="Sato S."/>
            <person name="Kaneko T."/>
            <person name="Kotani H."/>
            <person name="Asamizu E."/>
            <person name="Miyajima N."/>
            <person name="Tabata S."/>
        </authorList>
    </citation>
    <scope>NUCLEOTIDE SEQUENCE [LARGE SCALE GENOMIC DNA]</scope>
    <source>
        <strain>cv. Columbia</strain>
    </source>
</reference>
<reference key="3">
    <citation type="journal article" date="2017" name="Plant J.">
        <title>Araport11: a complete reannotation of the Arabidopsis thaliana reference genome.</title>
        <authorList>
            <person name="Cheng C.Y."/>
            <person name="Krishnakumar V."/>
            <person name="Chan A.P."/>
            <person name="Thibaud-Nissen F."/>
            <person name="Schobel S."/>
            <person name="Town C.D."/>
        </authorList>
    </citation>
    <scope>GENOME REANNOTATION</scope>
    <source>
        <strain>cv. Columbia</strain>
    </source>
</reference>
<reference key="4">
    <citation type="journal article" date="2003" name="Science">
        <title>Empirical analysis of transcriptional activity in the Arabidopsis genome.</title>
        <authorList>
            <person name="Yamada K."/>
            <person name="Lim J."/>
            <person name="Dale J.M."/>
            <person name="Chen H."/>
            <person name="Shinn P."/>
            <person name="Palm C.J."/>
            <person name="Southwick A.M."/>
            <person name="Wu H.C."/>
            <person name="Kim C.J."/>
            <person name="Nguyen M."/>
            <person name="Pham P.K."/>
            <person name="Cheuk R.F."/>
            <person name="Karlin-Newmann G."/>
            <person name="Liu S.X."/>
            <person name="Lam B."/>
            <person name="Sakano H."/>
            <person name="Wu T."/>
            <person name="Yu G."/>
            <person name="Miranda M."/>
            <person name="Quach H.L."/>
            <person name="Tripp M."/>
            <person name="Chang C.H."/>
            <person name="Lee J.M."/>
            <person name="Toriumi M.J."/>
            <person name="Chan M.M."/>
            <person name="Tang C.C."/>
            <person name="Onodera C.S."/>
            <person name="Deng J.M."/>
            <person name="Akiyama K."/>
            <person name="Ansari Y."/>
            <person name="Arakawa T."/>
            <person name="Banh J."/>
            <person name="Banno F."/>
            <person name="Bowser L."/>
            <person name="Brooks S.Y."/>
            <person name="Carninci P."/>
            <person name="Chao Q."/>
            <person name="Choy N."/>
            <person name="Enju A."/>
            <person name="Goldsmith A.D."/>
            <person name="Gurjal M."/>
            <person name="Hansen N.F."/>
            <person name="Hayashizaki Y."/>
            <person name="Johnson-Hopson C."/>
            <person name="Hsuan V.W."/>
            <person name="Iida K."/>
            <person name="Karnes M."/>
            <person name="Khan S."/>
            <person name="Koesema E."/>
            <person name="Ishida J."/>
            <person name="Jiang P.X."/>
            <person name="Jones T."/>
            <person name="Kawai J."/>
            <person name="Kamiya A."/>
            <person name="Meyers C."/>
            <person name="Nakajima M."/>
            <person name="Narusaka M."/>
            <person name="Seki M."/>
            <person name="Sakurai T."/>
            <person name="Satou M."/>
            <person name="Tamse R."/>
            <person name="Vaysberg M."/>
            <person name="Wallender E.K."/>
            <person name="Wong C."/>
            <person name="Yamamura Y."/>
            <person name="Yuan S."/>
            <person name="Shinozaki K."/>
            <person name="Davis R.W."/>
            <person name="Theologis A."/>
            <person name="Ecker J.R."/>
        </authorList>
    </citation>
    <scope>NUCLEOTIDE SEQUENCE [LARGE SCALE MRNA]</scope>
    <source>
        <strain>cv. Columbia</strain>
    </source>
</reference>
<reference key="5">
    <citation type="journal article" date="1998" name="FEBS Lett.">
        <title>Computational analyses and annotations of the Arabidopsis peroxidase gene family.</title>
        <authorList>
            <person name="Oestergaard L."/>
            <person name="Pedersen A.G."/>
            <person name="Jespersen H.M."/>
            <person name="Brunak S."/>
            <person name="Welinder K.G."/>
        </authorList>
    </citation>
    <scope>CHARACTERIZATION</scope>
    <source>
        <strain>cv. Columbia</strain>
    </source>
</reference>
<reference key="6">
    <citation type="journal article" date="2000" name="Proc. Natl. Acad. Sci. U.S.A.">
        <title>Coordinated plant defense responses in Arabidopsis revealed by microarray analysis.</title>
        <authorList>
            <person name="Schenk P.M."/>
            <person name="Kazan K."/>
            <person name="Wilson I."/>
            <person name="Anderson J.P."/>
            <person name="Richmond T."/>
            <person name="Somerville S.C."/>
            <person name="Manners J.M."/>
        </authorList>
    </citation>
    <scope>INDUCTION</scope>
    <source>
        <strain>cv. Columbia</strain>
    </source>
</reference>
<reference key="7">
    <citation type="journal article" date="2002" name="Gene">
        <title>Analysis and expression of the class III peroxidase large gene family in Arabidopsis thaliana.</title>
        <authorList>
            <person name="Tognolli M."/>
            <person name="Penel C."/>
            <person name="Greppin H."/>
            <person name="Simon P."/>
        </authorList>
    </citation>
    <scope>GENE FAMILY ORGANIZATION</scope>
    <scope>NOMENCLATURE</scope>
    <source>
        <strain>cv. Columbia</strain>
    </source>
</reference>
<dbReference type="EC" id="1.11.1.7"/>
<dbReference type="EMBL" id="X98806">
    <property type="protein sequence ID" value="CAA67338.1"/>
    <property type="molecule type" value="mRNA"/>
</dbReference>
<dbReference type="EMBL" id="AB007650">
    <property type="protein sequence ID" value="BAB08292.1"/>
    <property type="molecule type" value="Genomic_DNA"/>
</dbReference>
<dbReference type="EMBL" id="CP002688">
    <property type="protein sequence ID" value="AED91991.1"/>
    <property type="molecule type" value="Genomic_DNA"/>
</dbReference>
<dbReference type="EMBL" id="AY057607">
    <property type="protein sequence ID" value="AAL14402.1"/>
    <property type="molecule type" value="mRNA"/>
</dbReference>
<dbReference type="EMBL" id="AY124834">
    <property type="protein sequence ID" value="AAM70543.1"/>
    <property type="molecule type" value="mRNA"/>
</dbReference>
<dbReference type="RefSeq" id="NP_196917.1">
    <property type="nucleotide sequence ID" value="NM_121417.5"/>
</dbReference>
<dbReference type="SMR" id="Q96509"/>
<dbReference type="FunCoup" id="Q96509">
    <property type="interactions" value="187"/>
</dbReference>
<dbReference type="STRING" id="3702.Q96509"/>
<dbReference type="PeroxiBase" id="221">
    <property type="entry name" value="AtPrx55"/>
</dbReference>
<dbReference type="GlyCosmos" id="Q96509">
    <property type="glycosylation" value="1 site, No reported glycans"/>
</dbReference>
<dbReference type="GlyGen" id="Q96509">
    <property type="glycosylation" value="1 site"/>
</dbReference>
<dbReference type="PaxDb" id="3702-AT5G14130.1"/>
<dbReference type="ProteomicsDB" id="236424"/>
<dbReference type="EnsemblPlants" id="AT5G14130.1">
    <property type="protein sequence ID" value="AT5G14130.1"/>
    <property type="gene ID" value="AT5G14130"/>
</dbReference>
<dbReference type="GeneID" id="831263"/>
<dbReference type="Gramene" id="AT5G14130.1">
    <property type="protein sequence ID" value="AT5G14130.1"/>
    <property type="gene ID" value="AT5G14130"/>
</dbReference>
<dbReference type="KEGG" id="ath:AT5G14130"/>
<dbReference type="Araport" id="AT5G14130"/>
<dbReference type="TAIR" id="AT5G14130"/>
<dbReference type="eggNOG" id="ENOG502QT4B">
    <property type="taxonomic scope" value="Eukaryota"/>
</dbReference>
<dbReference type="HOGENOM" id="CLU_010543_0_3_1"/>
<dbReference type="InParanoid" id="Q96509"/>
<dbReference type="OrthoDB" id="2113341at2759"/>
<dbReference type="PhylomeDB" id="Q96509"/>
<dbReference type="PRO" id="PR:Q96509"/>
<dbReference type="Proteomes" id="UP000006548">
    <property type="component" value="Chromosome 5"/>
</dbReference>
<dbReference type="ExpressionAtlas" id="Q96509">
    <property type="expression patterns" value="baseline and differential"/>
</dbReference>
<dbReference type="GO" id="GO:0005576">
    <property type="term" value="C:extracellular region"/>
    <property type="evidence" value="ECO:0007669"/>
    <property type="project" value="UniProtKB-SubCell"/>
</dbReference>
<dbReference type="GO" id="GO:0020037">
    <property type="term" value="F:heme binding"/>
    <property type="evidence" value="ECO:0007669"/>
    <property type="project" value="InterPro"/>
</dbReference>
<dbReference type="GO" id="GO:0140825">
    <property type="term" value="F:lactoperoxidase activity"/>
    <property type="evidence" value="ECO:0007669"/>
    <property type="project" value="UniProtKB-EC"/>
</dbReference>
<dbReference type="GO" id="GO:0046872">
    <property type="term" value="F:metal ion binding"/>
    <property type="evidence" value="ECO:0007669"/>
    <property type="project" value="UniProtKB-KW"/>
</dbReference>
<dbReference type="GO" id="GO:0042744">
    <property type="term" value="P:hydrogen peroxide catabolic process"/>
    <property type="evidence" value="ECO:0007669"/>
    <property type="project" value="UniProtKB-KW"/>
</dbReference>
<dbReference type="GO" id="GO:0006979">
    <property type="term" value="P:response to oxidative stress"/>
    <property type="evidence" value="ECO:0007669"/>
    <property type="project" value="InterPro"/>
</dbReference>
<dbReference type="CDD" id="cd00693">
    <property type="entry name" value="secretory_peroxidase"/>
    <property type="match status" value="1"/>
</dbReference>
<dbReference type="FunFam" id="1.10.420.10:FF:000001">
    <property type="entry name" value="Peroxidase"/>
    <property type="match status" value="1"/>
</dbReference>
<dbReference type="FunFam" id="1.10.520.10:FF:000008">
    <property type="entry name" value="Peroxidase"/>
    <property type="match status" value="1"/>
</dbReference>
<dbReference type="Gene3D" id="1.10.520.10">
    <property type="match status" value="1"/>
</dbReference>
<dbReference type="Gene3D" id="1.10.420.10">
    <property type="entry name" value="Peroxidase, domain 2"/>
    <property type="match status" value="1"/>
</dbReference>
<dbReference type="InterPro" id="IPR002016">
    <property type="entry name" value="Haem_peroxidase"/>
</dbReference>
<dbReference type="InterPro" id="IPR010255">
    <property type="entry name" value="Haem_peroxidase_sf"/>
</dbReference>
<dbReference type="InterPro" id="IPR000823">
    <property type="entry name" value="Peroxidase_pln"/>
</dbReference>
<dbReference type="InterPro" id="IPR019794">
    <property type="entry name" value="Peroxidases_AS"/>
</dbReference>
<dbReference type="InterPro" id="IPR019793">
    <property type="entry name" value="Peroxidases_heam-ligand_BS"/>
</dbReference>
<dbReference type="InterPro" id="IPR033905">
    <property type="entry name" value="Secretory_peroxidase"/>
</dbReference>
<dbReference type="PANTHER" id="PTHR31517">
    <property type="match status" value="1"/>
</dbReference>
<dbReference type="PANTHER" id="PTHR31517:SF51">
    <property type="entry name" value="PEROXIDASE 55"/>
    <property type="match status" value="1"/>
</dbReference>
<dbReference type="Pfam" id="PF00141">
    <property type="entry name" value="peroxidase"/>
    <property type="match status" value="1"/>
</dbReference>
<dbReference type="PRINTS" id="PR00458">
    <property type="entry name" value="PEROXIDASE"/>
</dbReference>
<dbReference type="PRINTS" id="PR00461">
    <property type="entry name" value="PLPEROXIDASE"/>
</dbReference>
<dbReference type="SUPFAM" id="SSF48113">
    <property type="entry name" value="Heme-dependent peroxidases"/>
    <property type="match status" value="1"/>
</dbReference>
<dbReference type="PROSITE" id="PS00435">
    <property type="entry name" value="PEROXIDASE_1"/>
    <property type="match status" value="1"/>
</dbReference>
<dbReference type="PROSITE" id="PS00436">
    <property type="entry name" value="PEROXIDASE_2"/>
    <property type="match status" value="1"/>
</dbReference>
<dbReference type="PROSITE" id="PS50873">
    <property type="entry name" value="PEROXIDASE_4"/>
    <property type="match status" value="1"/>
</dbReference>
<evidence type="ECO:0000255" key="1"/>
<evidence type="ECO:0000255" key="2">
    <source>
        <dbReference type="PROSITE-ProRule" id="PRU00297"/>
    </source>
</evidence>
<evidence type="ECO:0000255" key="3">
    <source>
        <dbReference type="PROSITE-ProRule" id="PRU10012"/>
    </source>
</evidence>
<evidence type="ECO:0000269" key="4">
    <source>
    </source>
</evidence>
<feature type="signal peptide" evidence="1">
    <location>
        <begin position="1"/>
        <end position="30"/>
    </location>
</feature>
<feature type="chain" id="PRO_0000023720" description="Peroxidase 55">
    <location>
        <begin position="31"/>
        <end position="330"/>
    </location>
</feature>
<feature type="active site" description="Proton acceptor" evidence="2 3">
    <location>
        <position position="72"/>
    </location>
</feature>
<feature type="binding site" evidence="2">
    <location>
        <position position="73"/>
    </location>
    <ligand>
        <name>Ca(2+)</name>
        <dbReference type="ChEBI" id="CHEBI:29108"/>
        <label>1</label>
    </ligand>
</feature>
<feature type="binding site" evidence="2">
    <location>
        <position position="76"/>
    </location>
    <ligand>
        <name>Ca(2+)</name>
        <dbReference type="ChEBI" id="CHEBI:29108"/>
        <label>1</label>
    </ligand>
</feature>
<feature type="binding site" evidence="2">
    <location>
        <position position="78"/>
    </location>
    <ligand>
        <name>Ca(2+)</name>
        <dbReference type="ChEBI" id="CHEBI:29108"/>
        <label>1</label>
    </ligand>
</feature>
<feature type="binding site" evidence="2">
    <location>
        <position position="80"/>
    </location>
    <ligand>
        <name>Ca(2+)</name>
        <dbReference type="ChEBI" id="CHEBI:29108"/>
        <label>1</label>
    </ligand>
</feature>
<feature type="binding site" evidence="2">
    <location>
        <position position="82"/>
    </location>
    <ligand>
        <name>Ca(2+)</name>
        <dbReference type="ChEBI" id="CHEBI:29108"/>
        <label>1</label>
    </ligand>
</feature>
<feature type="binding site" evidence="2">
    <location>
        <position position="169"/>
    </location>
    <ligand>
        <name>substrate</name>
    </ligand>
</feature>
<feature type="binding site" description="axial binding residue" evidence="2">
    <location>
        <position position="199"/>
    </location>
    <ligand>
        <name>heme b</name>
        <dbReference type="ChEBI" id="CHEBI:60344"/>
    </ligand>
    <ligandPart>
        <name>Fe</name>
        <dbReference type="ChEBI" id="CHEBI:18248"/>
    </ligandPart>
</feature>
<feature type="binding site" evidence="2">
    <location>
        <position position="200"/>
    </location>
    <ligand>
        <name>Ca(2+)</name>
        <dbReference type="ChEBI" id="CHEBI:29108"/>
        <label>2</label>
    </ligand>
</feature>
<feature type="binding site" evidence="2">
    <location>
        <position position="250"/>
    </location>
    <ligand>
        <name>Ca(2+)</name>
        <dbReference type="ChEBI" id="CHEBI:29108"/>
        <label>2</label>
    </ligand>
</feature>
<feature type="binding site" evidence="2">
    <location>
        <position position="253"/>
    </location>
    <ligand>
        <name>Ca(2+)</name>
        <dbReference type="ChEBI" id="CHEBI:29108"/>
        <label>2</label>
    </ligand>
</feature>
<feature type="binding site" evidence="2">
    <location>
        <position position="258"/>
    </location>
    <ligand>
        <name>Ca(2+)</name>
        <dbReference type="ChEBI" id="CHEBI:29108"/>
        <label>2</label>
    </ligand>
</feature>
<feature type="site" description="Transition state stabilizer" evidence="2">
    <location>
        <position position="68"/>
    </location>
</feature>
<feature type="glycosylation site" description="N-linked (GlcNAc...) asparagine" evidence="1">
    <location>
        <position position="215"/>
    </location>
</feature>
<feature type="disulfide bond" evidence="2">
    <location>
        <begin position="41"/>
        <end position="121"/>
    </location>
</feature>
<feature type="disulfide bond" evidence="2">
    <location>
        <begin position="74"/>
        <end position="79"/>
    </location>
</feature>
<feature type="disulfide bond" evidence="2">
    <location>
        <begin position="127"/>
        <end position="326"/>
    </location>
</feature>
<feature type="disulfide bond" evidence="2">
    <location>
        <begin position="206"/>
        <end position="238"/>
    </location>
</feature>
<protein>
    <recommendedName>
        <fullName>Peroxidase 55</fullName>
        <shortName>Atperox P55</shortName>
        <ecNumber>1.11.1.7</ecNumber>
    </recommendedName>
    <alternativeName>
        <fullName>ATP20a</fullName>
    </alternativeName>
</protein>
<comment type="function">
    <text>Removal of H(2)O(2), oxidation of toxic reductants, biosynthesis and degradation of lignin, suberization, auxin catabolism, response to environmental stresses such as wounding, pathogen attack and oxidative stress. These functions might be dependent on each isozyme/isoform in each plant tissue.</text>
</comment>
<comment type="catalytic activity">
    <reaction>
        <text>2 a phenolic donor + H2O2 = 2 a phenolic radical donor + 2 H2O</text>
        <dbReference type="Rhea" id="RHEA:56136"/>
        <dbReference type="ChEBI" id="CHEBI:15377"/>
        <dbReference type="ChEBI" id="CHEBI:16240"/>
        <dbReference type="ChEBI" id="CHEBI:139520"/>
        <dbReference type="ChEBI" id="CHEBI:139521"/>
        <dbReference type="EC" id="1.11.1.7"/>
    </reaction>
</comment>
<comment type="cofactor">
    <cofactor evidence="2">
        <name>heme b</name>
        <dbReference type="ChEBI" id="CHEBI:60344"/>
    </cofactor>
    <text evidence="2">Binds 1 heme b (iron(II)-protoporphyrin IX) group per subunit.</text>
</comment>
<comment type="cofactor">
    <cofactor evidence="2">
        <name>Ca(2+)</name>
        <dbReference type="ChEBI" id="CHEBI:29108"/>
    </cofactor>
    <text evidence="2">Binds 2 calcium ions per subunit.</text>
</comment>
<comment type="subcellular location">
    <subcellularLocation>
        <location evidence="2">Secreted</location>
    </subcellularLocation>
</comment>
<comment type="tissue specificity">
    <text>Slightly expressed in roots.</text>
</comment>
<comment type="induction">
    <text evidence="4">By methyl jasmonate, a plant defense-related signaling molecule.</text>
</comment>
<comment type="miscellaneous">
    <text>There are 73 peroxidase genes in A.thaliana.</text>
</comment>
<comment type="similarity">
    <text evidence="2">Belongs to the peroxidase family. Classical plant (class III) peroxidase subfamily.</text>
</comment>